<feature type="chain" id="PRO_1000144091" description="Large ribosomal subunit protein uL13">
    <location>
        <begin position="1"/>
        <end position="145"/>
    </location>
</feature>
<sequence>MRTTFMAKANEVERKWYVVDAEGQTLGRLSTEVASILRGKHKPTFTPHVDTGDHVIIINAEKIHLTGNKLNDKIYYRHTNHPGGLKQRTALEMRTNYPVQMLELAIKGMLPKGRLGRQVSKKLNVYAGAEHPHQAQQPEVYELRG</sequence>
<proteinExistence type="inferred from homology"/>
<name>RL13_BACMK</name>
<gene>
    <name evidence="1" type="primary">rplM</name>
    <name type="ordered locus">BcerKBAB4_0138</name>
</gene>
<accession>A9VPB0</accession>
<comment type="function">
    <text evidence="1">This protein is one of the early assembly proteins of the 50S ribosomal subunit, although it is not seen to bind rRNA by itself. It is important during the early stages of 50S assembly.</text>
</comment>
<comment type="subunit">
    <text evidence="1">Part of the 50S ribosomal subunit.</text>
</comment>
<comment type="similarity">
    <text evidence="1">Belongs to the universal ribosomal protein uL13 family.</text>
</comment>
<dbReference type="EMBL" id="CP000903">
    <property type="protein sequence ID" value="ABY41407.1"/>
    <property type="molecule type" value="Genomic_DNA"/>
</dbReference>
<dbReference type="RefSeq" id="WP_002029337.1">
    <property type="nucleotide sequence ID" value="NZ_CAKMRX030000129.1"/>
</dbReference>
<dbReference type="SMR" id="A9VPB0"/>
<dbReference type="GeneID" id="66264788"/>
<dbReference type="KEGG" id="bwe:BcerKBAB4_0138"/>
<dbReference type="eggNOG" id="COG0102">
    <property type="taxonomic scope" value="Bacteria"/>
</dbReference>
<dbReference type="HOGENOM" id="CLU_082184_2_2_9"/>
<dbReference type="Proteomes" id="UP000002154">
    <property type="component" value="Chromosome"/>
</dbReference>
<dbReference type="GO" id="GO:0022625">
    <property type="term" value="C:cytosolic large ribosomal subunit"/>
    <property type="evidence" value="ECO:0007669"/>
    <property type="project" value="TreeGrafter"/>
</dbReference>
<dbReference type="GO" id="GO:0003729">
    <property type="term" value="F:mRNA binding"/>
    <property type="evidence" value="ECO:0007669"/>
    <property type="project" value="TreeGrafter"/>
</dbReference>
<dbReference type="GO" id="GO:0003735">
    <property type="term" value="F:structural constituent of ribosome"/>
    <property type="evidence" value="ECO:0007669"/>
    <property type="project" value="InterPro"/>
</dbReference>
<dbReference type="GO" id="GO:0017148">
    <property type="term" value="P:negative regulation of translation"/>
    <property type="evidence" value="ECO:0007669"/>
    <property type="project" value="TreeGrafter"/>
</dbReference>
<dbReference type="GO" id="GO:0006412">
    <property type="term" value="P:translation"/>
    <property type="evidence" value="ECO:0007669"/>
    <property type="project" value="UniProtKB-UniRule"/>
</dbReference>
<dbReference type="CDD" id="cd00392">
    <property type="entry name" value="Ribosomal_L13"/>
    <property type="match status" value="1"/>
</dbReference>
<dbReference type="FunFam" id="3.90.1180.10:FF:000001">
    <property type="entry name" value="50S ribosomal protein L13"/>
    <property type="match status" value="1"/>
</dbReference>
<dbReference type="Gene3D" id="3.90.1180.10">
    <property type="entry name" value="Ribosomal protein L13"/>
    <property type="match status" value="1"/>
</dbReference>
<dbReference type="HAMAP" id="MF_01366">
    <property type="entry name" value="Ribosomal_uL13"/>
    <property type="match status" value="1"/>
</dbReference>
<dbReference type="InterPro" id="IPR005822">
    <property type="entry name" value="Ribosomal_uL13"/>
</dbReference>
<dbReference type="InterPro" id="IPR005823">
    <property type="entry name" value="Ribosomal_uL13_bac-type"/>
</dbReference>
<dbReference type="InterPro" id="IPR023563">
    <property type="entry name" value="Ribosomal_uL13_CS"/>
</dbReference>
<dbReference type="InterPro" id="IPR036899">
    <property type="entry name" value="Ribosomal_uL13_sf"/>
</dbReference>
<dbReference type="NCBIfam" id="TIGR01066">
    <property type="entry name" value="rplM_bact"/>
    <property type="match status" value="1"/>
</dbReference>
<dbReference type="PANTHER" id="PTHR11545:SF2">
    <property type="entry name" value="LARGE RIBOSOMAL SUBUNIT PROTEIN UL13M"/>
    <property type="match status" value="1"/>
</dbReference>
<dbReference type="PANTHER" id="PTHR11545">
    <property type="entry name" value="RIBOSOMAL PROTEIN L13"/>
    <property type="match status" value="1"/>
</dbReference>
<dbReference type="Pfam" id="PF00572">
    <property type="entry name" value="Ribosomal_L13"/>
    <property type="match status" value="1"/>
</dbReference>
<dbReference type="PIRSF" id="PIRSF002181">
    <property type="entry name" value="Ribosomal_L13"/>
    <property type="match status" value="1"/>
</dbReference>
<dbReference type="SUPFAM" id="SSF52161">
    <property type="entry name" value="Ribosomal protein L13"/>
    <property type="match status" value="1"/>
</dbReference>
<dbReference type="PROSITE" id="PS00783">
    <property type="entry name" value="RIBOSOMAL_L13"/>
    <property type="match status" value="1"/>
</dbReference>
<organism>
    <name type="scientific">Bacillus mycoides (strain KBAB4)</name>
    <name type="common">Bacillus weihenstephanensis</name>
    <dbReference type="NCBI Taxonomy" id="315730"/>
    <lineage>
        <taxon>Bacteria</taxon>
        <taxon>Bacillati</taxon>
        <taxon>Bacillota</taxon>
        <taxon>Bacilli</taxon>
        <taxon>Bacillales</taxon>
        <taxon>Bacillaceae</taxon>
        <taxon>Bacillus</taxon>
        <taxon>Bacillus cereus group</taxon>
    </lineage>
</organism>
<protein>
    <recommendedName>
        <fullName evidence="1">Large ribosomal subunit protein uL13</fullName>
    </recommendedName>
    <alternativeName>
        <fullName evidence="2">50S ribosomal protein L13</fullName>
    </alternativeName>
</protein>
<keyword id="KW-0687">Ribonucleoprotein</keyword>
<keyword id="KW-0689">Ribosomal protein</keyword>
<evidence type="ECO:0000255" key="1">
    <source>
        <dbReference type="HAMAP-Rule" id="MF_01366"/>
    </source>
</evidence>
<evidence type="ECO:0000305" key="2"/>
<reference key="1">
    <citation type="journal article" date="2008" name="Chem. Biol. Interact.">
        <title>Extending the Bacillus cereus group genomics to putative food-borne pathogens of different toxicity.</title>
        <authorList>
            <person name="Lapidus A."/>
            <person name="Goltsman E."/>
            <person name="Auger S."/>
            <person name="Galleron N."/>
            <person name="Segurens B."/>
            <person name="Dossat C."/>
            <person name="Land M.L."/>
            <person name="Broussolle V."/>
            <person name="Brillard J."/>
            <person name="Guinebretiere M.-H."/>
            <person name="Sanchis V."/>
            <person name="Nguen-the C."/>
            <person name="Lereclus D."/>
            <person name="Richardson P."/>
            <person name="Wincker P."/>
            <person name="Weissenbach J."/>
            <person name="Ehrlich S.D."/>
            <person name="Sorokin A."/>
        </authorList>
    </citation>
    <scope>NUCLEOTIDE SEQUENCE [LARGE SCALE GENOMIC DNA]</scope>
    <source>
        <strain>KBAB4</strain>
    </source>
</reference>